<organism evidence="20">
    <name type="scientific">Homo sapiens</name>
    <name type="common">Human</name>
    <dbReference type="NCBI Taxonomy" id="9606"/>
    <lineage>
        <taxon>Eukaryota</taxon>
        <taxon>Metazoa</taxon>
        <taxon>Chordata</taxon>
        <taxon>Craniata</taxon>
        <taxon>Vertebrata</taxon>
        <taxon>Euteleostomi</taxon>
        <taxon>Mammalia</taxon>
        <taxon>Eutheria</taxon>
        <taxon>Euarchontoglires</taxon>
        <taxon>Primates</taxon>
        <taxon>Haplorrhini</taxon>
        <taxon>Catarrhini</taxon>
        <taxon>Hominidae</taxon>
        <taxon>Homo</taxon>
    </lineage>
</organism>
<protein>
    <recommendedName>
        <fullName>Serine/threonine-protein kinase tousled-like 1</fullName>
        <ecNumber>2.7.11.1</ecNumber>
    </recommendedName>
    <alternativeName>
        <fullName>PKU-beta</fullName>
    </alternativeName>
    <alternativeName>
        <fullName>Tousled-like kinase 1</fullName>
    </alternativeName>
</protein>
<sequence length="766" mass="86700">MSVQSSSGSLEGPPSWSQLSTSPTPGSAAAARSLLNHTPPSGRPREGAMDELHSLDPRRQELLEARFTGVASGSTGSTGSCSVGAKASTNNESSNHSFGSLGSLSDKESETPEKKQSESSRGRKRKAENQNESSQGKSIGGRGHKISDYFEYQGGNGSSPVRGIPPAIRSPQNSHSHSTPSSSVRPNSPSPTALAFGDHPIVQPKQLSFKIIQTDLTMLKLAALESNKIQDLEKKEGRIDDLLRANCDLRRQIDEQQKLLEKYKERLNKCISMSKKLLIEKSTQEKLSSREKSMQDRLRLGHFTTVRHGASFTEQWTDGFAFQNLVKQQEWVNQQREDIERQRKLLAKRKPPTANNSQAPSTNSEPKQRKNKAVNGAENDPFVRPNLPQLLTLAEYHEQEEIFKLRLGHLKKEEAEIQAELERLERVRNLHIRELKRINNEDNSQFKDHPTLNERYLLLHLLGRGGFSEVYKAFDLYEQRYAAVKIHQLNKSWRDEKKENYHKHACREYRIHKELDHPRIVKLYDYFSLDTDTFCTVLEYCEGNDLDFYLKQHKLMSEKEARSIVMQIVNALRYLNEIKPPIIHYDLKPGNILLVDGTACGEIKITDFGLSKIMDDDSYGVDGMDLTSQGAGTYWYLPPECFVVGKEPPKISNKVDVWSVGVIFFQCLYGRKPFGHNQSQQDILQENTILKATEVQFPVKPVVSSEAKAFIRRCLAYRKEDRFDVHQLANDPYLLPHMRRSNSSGNLHMAGLTASPTPPSSSIITY</sequence>
<feature type="chain" id="PRO_0000086752" description="Serine/threonine-protein kinase tousled-like 1">
    <location>
        <begin position="1"/>
        <end position="766"/>
    </location>
</feature>
<feature type="domain" description="Protein kinase" evidence="4">
    <location>
        <begin position="456"/>
        <end position="734"/>
    </location>
</feature>
<feature type="region of interest" description="Disordered" evidence="5">
    <location>
        <begin position="1"/>
        <end position="197"/>
    </location>
</feature>
<feature type="region of interest" description="Disordered" evidence="5">
    <location>
        <begin position="346"/>
        <end position="383"/>
    </location>
</feature>
<feature type="coiled-coil region" evidence="3">
    <location>
        <begin position="230"/>
        <end position="281"/>
    </location>
</feature>
<feature type="coiled-coil region" evidence="3">
    <location>
        <begin position="397"/>
        <end position="445"/>
    </location>
</feature>
<feature type="compositionally biased region" description="Polar residues" evidence="5">
    <location>
        <begin position="1"/>
        <end position="19"/>
    </location>
</feature>
<feature type="compositionally biased region" description="Low complexity" evidence="5">
    <location>
        <begin position="20"/>
        <end position="33"/>
    </location>
</feature>
<feature type="compositionally biased region" description="Basic and acidic residues" evidence="5">
    <location>
        <begin position="43"/>
        <end position="64"/>
    </location>
</feature>
<feature type="compositionally biased region" description="Low complexity" evidence="5">
    <location>
        <begin position="68"/>
        <end position="85"/>
    </location>
</feature>
<feature type="compositionally biased region" description="Polar residues" evidence="5">
    <location>
        <begin position="87"/>
        <end position="103"/>
    </location>
</feature>
<feature type="compositionally biased region" description="Basic and acidic residues" evidence="5">
    <location>
        <begin position="105"/>
        <end position="121"/>
    </location>
</feature>
<feature type="compositionally biased region" description="Low complexity" evidence="5">
    <location>
        <begin position="170"/>
        <end position="192"/>
    </location>
</feature>
<feature type="compositionally biased region" description="Polar residues" evidence="5">
    <location>
        <begin position="353"/>
        <end position="365"/>
    </location>
</feature>
<feature type="active site" description="Proton acceptor">
    <location>
        <position position="586"/>
    </location>
</feature>
<feature type="binding site" evidence="4">
    <location>
        <begin position="462"/>
        <end position="470"/>
    </location>
    <ligand>
        <name>ATP</name>
        <dbReference type="ChEBI" id="CHEBI:30616"/>
    </ligand>
</feature>
<feature type="binding site" evidence="4">
    <location>
        <position position="485"/>
    </location>
    <ligand>
        <name>ATP</name>
        <dbReference type="ChEBI" id="CHEBI:30616"/>
    </ligand>
</feature>
<feature type="modified residue" description="Phosphothreonine" evidence="25">
    <location>
        <position position="38"/>
    </location>
</feature>
<feature type="modified residue" description="Phosphoserine" evidence="25">
    <location>
        <position position="54"/>
    </location>
</feature>
<feature type="modified residue" description="Phosphoserine" evidence="25">
    <location>
        <position position="77"/>
    </location>
</feature>
<feature type="modified residue" description="Phosphoserine" evidence="2">
    <location>
        <position position="80"/>
    </location>
</feature>
<feature type="modified residue" description="Phosphoserine" evidence="1">
    <location>
        <position position="134"/>
    </location>
</feature>
<feature type="modified residue" description="Phosphoserine" evidence="22 23 25">
    <location>
        <position position="159"/>
    </location>
</feature>
<feature type="modified residue" description="Phosphoserine" evidence="1">
    <location>
        <position position="174"/>
    </location>
</feature>
<feature type="modified residue" description="Phosphoserine" evidence="1">
    <location>
        <position position="176"/>
    </location>
</feature>
<feature type="modified residue" description="Phosphoserine" evidence="10">
    <location>
        <position position="743"/>
    </location>
</feature>
<feature type="splice variant" id="VSP_050570" description="In isoform 3." evidence="16">
    <location>
        <begin position="1"/>
        <end position="217"/>
    </location>
</feature>
<feature type="splice variant" id="VSP_043504" description="In isoform 5." evidence="17">
    <location>
        <begin position="1"/>
        <end position="48"/>
    </location>
</feature>
<feature type="splice variant" id="VSP_043505" description="In isoform 4." evidence="17">
    <original>MSVQSSSGSLEGPP</original>
    <variation>MAVLFLYDLKTTGK</variation>
    <location>
        <begin position="1"/>
        <end position="14"/>
    </location>
</feature>
<feature type="splice variant" id="VSP_043506" description="In isoform 4." evidence="17">
    <location>
        <begin position="15"/>
        <end position="110"/>
    </location>
</feature>
<feature type="splice variant" id="VSP_050571" description="In isoform 2." evidence="18">
    <original>G</original>
    <variation>GFPNLPVFQSLAYWEMGRTAGG</variation>
    <location>
        <position position="136"/>
    </location>
</feature>
<feature type="sequence variant" id="VAR_041215" evidence="11">
    <original>R</original>
    <variation>C</variation>
    <location>
        <position position="121"/>
    </location>
</feature>
<feature type="mutagenesis site" description="Loss of kinase activity." evidence="6 9">
    <original>D</original>
    <variation>A</variation>
    <location>
        <position position="607"/>
    </location>
</feature>
<feature type="mutagenesis site" description="Loss of kinase inhibition in response to DNA damage." evidence="10">
    <original>S</original>
    <variation>A</variation>
    <location>
        <position position="743"/>
    </location>
</feature>
<feature type="mutagenesis site" description="Loss of kinase inhibition in response to DNA damage." evidence="10">
    <original>S</original>
    <variation>D</variation>
    <location>
        <position position="743"/>
    </location>
</feature>
<feature type="mutagenesis site" description="Loss of kinase inhibition in response to DNA damage." evidence="10">
    <original>S</original>
    <variation>E</variation>
    <location>
        <position position="743"/>
    </location>
</feature>
<feature type="sequence conflict" description="In Ref. 2; AAF03094." evidence="19" ref="2">
    <original>S</original>
    <variation>T</variation>
    <location>
        <position position="88"/>
    </location>
</feature>
<feature type="sequence conflict" description="In Ref. 1; BAA20562." evidence="19" ref="1">
    <original>G</original>
    <variation>E</variation>
    <location>
        <position position="102"/>
    </location>
</feature>
<feature type="sequence conflict" description="In Ref. 1; BAA20562." evidence="19" ref="1">
    <original>Q</original>
    <variation>L</variation>
    <location>
        <position position="230"/>
    </location>
</feature>
<feature type="sequence conflict" description="In Ref. 1; BAA20562." evidence="19" ref="1">
    <original>E</original>
    <variation>D</variation>
    <location>
        <position position="261"/>
    </location>
</feature>
<feature type="sequence conflict" description="In Ref. 1; BAA20562." evidence="19" ref="1">
    <original>E</original>
    <variation>G</variation>
    <location>
        <position position="416"/>
    </location>
</feature>
<feature type="sequence conflict" description="In Ref. 1; BAA20562." evidence="19" ref="1">
    <original>N</original>
    <variation>H</variation>
    <location>
        <position position="439"/>
    </location>
</feature>
<feature type="sequence conflict" description="In Ref. 1; BAA20562." evidence="19" ref="1">
    <original>Y</original>
    <variation>D</variation>
    <location>
        <position position="471"/>
    </location>
</feature>
<feature type="sequence conflict" description="In Ref. 1; BAA20562." evidence="19" ref="1">
    <original>Y</original>
    <variation>S</variation>
    <location>
        <position position="477"/>
    </location>
</feature>
<feature type="sequence conflict" description="In Ref. 1; BAA20562." evidence="19" ref="1">
    <original>D</original>
    <variation>V</variation>
    <location>
        <position position="625"/>
    </location>
</feature>
<feature type="sequence conflict" description="In Ref. 1; BAA20562." evidence="19" ref="1">
    <original>F</original>
    <variation>Y</variation>
    <location>
        <position position="665"/>
    </location>
</feature>
<feature type="sequence conflict" description="In Ref. 1; BAA20562." evidence="19" ref="1">
    <original>N</original>
    <variation>C</variation>
    <location>
        <position position="730"/>
    </location>
</feature>
<feature type="modified residue" description="N-acetylmethionine" evidence="24">
    <location sequence="Q9UKI8-3">
        <position position="1"/>
    </location>
</feature>
<name>TLK1_HUMAN</name>
<dbReference type="EC" id="2.7.11.1"/>
<dbReference type="EMBL" id="AB004885">
    <property type="protein sequence ID" value="BAA20562.1"/>
    <property type="molecule type" value="mRNA"/>
</dbReference>
<dbReference type="EMBL" id="AF162666">
    <property type="protein sequence ID" value="AAF03094.1"/>
    <property type="status" value="ALT_INIT"/>
    <property type="molecule type" value="mRNA"/>
</dbReference>
<dbReference type="EMBL" id="AF246219">
    <property type="protein sequence ID" value="AAF71263.1"/>
    <property type="molecule type" value="mRNA"/>
</dbReference>
<dbReference type="EMBL" id="D50927">
    <property type="protein sequence ID" value="BAA09486.2"/>
    <property type="status" value="ALT_INIT"/>
    <property type="molecule type" value="mRNA"/>
</dbReference>
<dbReference type="EMBL" id="AK090779">
    <property type="protein sequence ID" value="BAG52227.1"/>
    <property type="molecule type" value="mRNA"/>
</dbReference>
<dbReference type="EMBL" id="AK301857">
    <property type="protein sequence ID" value="BAG63299.1"/>
    <property type="molecule type" value="mRNA"/>
</dbReference>
<dbReference type="EMBL" id="AC007739">
    <property type="status" value="NOT_ANNOTATED_CDS"/>
    <property type="molecule type" value="Genomic_DNA"/>
</dbReference>
<dbReference type="EMBL" id="AC009953">
    <property type="status" value="NOT_ANNOTATED_CDS"/>
    <property type="molecule type" value="Genomic_DNA"/>
</dbReference>
<dbReference type="EMBL" id="AC010092">
    <property type="status" value="NOT_ANNOTATED_CDS"/>
    <property type="molecule type" value="Genomic_DNA"/>
</dbReference>
<dbReference type="EMBL" id="BC032657">
    <property type="protein sequence ID" value="AAH32657.1"/>
    <property type="molecule type" value="mRNA"/>
</dbReference>
<dbReference type="CCDS" id="CCDS2241.1">
    <molecule id="Q9UKI8-1"/>
</dbReference>
<dbReference type="CCDS" id="CCDS46447.1">
    <molecule id="Q9UKI8-5"/>
</dbReference>
<dbReference type="CCDS" id="CCDS46448.1">
    <molecule id="Q9UKI8-4"/>
</dbReference>
<dbReference type="RefSeq" id="NP_001130026.1">
    <molecule id="Q9UKI8-5"/>
    <property type="nucleotide sequence ID" value="NM_001136554.2"/>
</dbReference>
<dbReference type="RefSeq" id="NP_001130027.1">
    <molecule id="Q9UKI8-4"/>
    <property type="nucleotide sequence ID" value="NM_001136555.2"/>
</dbReference>
<dbReference type="RefSeq" id="NP_036422.3">
    <molecule id="Q9UKI8-1"/>
    <property type="nucleotide sequence ID" value="NM_012290.4"/>
</dbReference>
<dbReference type="RefSeq" id="XP_016860910.1">
    <property type="nucleotide sequence ID" value="XM_017005421.1"/>
</dbReference>
<dbReference type="RefSeq" id="XP_016860911.1">
    <molecule id="Q9UKI8-3"/>
    <property type="nucleotide sequence ID" value="XM_017005422.3"/>
</dbReference>
<dbReference type="RefSeq" id="XP_054200744.1">
    <molecule id="Q9UKI8-3"/>
    <property type="nucleotide sequence ID" value="XM_054344769.1"/>
</dbReference>
<dbReference type="RefSeq" id="XP_054200745.1">
    <molecule id="Q9UKI8-3"/>
    <property type="nucleotide sequence ID" value="XM_054344770.1"/>
</dbReference>
<dbReference type="RefSeq" id="XP_054200746.1">
    <molecule id="Q9UKI8-3"/>
    <property type="nucleotide sequence ID" value="XM_054344771.1"/>
</dbReference>
<dbReference type="RefSeq" id="XP_054200747.1">
    <molecule id="Q9UKI8-3"/>
    <property type="nucleotide sequence ID" value="XM_054344772.1"/>
</dbReference>
<dbReference type="SMR" id="Q9UKI8"/>
<dbReference type="BioGRID" id="115206">
    <property type="interactions" value="61"/>
</dbReference>
<dbReference type="FunCoup" id="Q9UKI8">
    <property type="interactions" value="4624"/>
</dbReference>
<dbReference type="IntAct" id="Q9UKI8">
    <property type="interactions" value="43"/>
</dbReference>
<dbReference type="MINT" id="Q9UKI8"/>
<dbReference type="STRING" id="9606.ENSP00000411099"/>
<dbReference type="BindingDB" id="Q9UKI8"/>
<dbReference type="ChEMBL" id="CHEMBL5388"/>
<dbReference type="DrugBank" id="DB12010">
    <property type="generic name" value="Fostamatinib"/>
</dbReference>
<dbReference type="DrugCentral" id="Q9UKI8"/>
<dbReference type="GlyGen" id="Q9UKI8">
    <property type="glycosylation" value="4 sites, 1 N-linked glycan (1 site), 1 O-linked glycan (1 site)"/>
</dbReference>
<dbReference type="iPTMnet" id="Q9UKI8"/>
<dbReference type="PhosphoSitePlus" id="Q9UKI8"/>
<dbReference type="BioMuta" id="TLK1"/>
<dbReference type="DMDM" id="34223086"/>
<dbReference type="jPOST" id="Q9UKI8"/>
<dbReference type="MassIVE" id="Q9UKI8"/>
<dbReference type="PaxDb" id="9606-ENSP00000411099"/>
<dbReference type="PeptideAtlas" id="Q9UKI8"/>
<dbReference type="ProteomicsDB" id="84791">
    <molecule id="Q9UKI8-1"/>
</dbReference>
<dbReference type="ProteomicsDB" id="84792">
    <molecule id="Q9UKI8-2"/>
</dbReference>
<dbReference type="ProteomicsDB" id="84793">
    <molecule id="Q9UKI8-3"/>
</dbReference>
<dbReference type="ProteomicsDB" id="84794">
    <molecule id="Q9UKI8-4"/>
</dbReference>
<dbReference type="ProteomicsDB" id="84795">
    <molecule id="Q9UKI8-5"/>
</dbReference>
<dbReference type="Pumba" id="Q9UKI8"/>
<dbReference type="Antibodypedia" id="19345">
    <property type="antibodies" value="389 antibodies from 36 providers"/>
</dbReference>
<dbReference type="DNASU" id="9874"/>
<dbReference type="Ensembl" id="ENST00000360843.7">
    <molecule id="Q9UKI8-2"/>
    <property type="protein sequence ID" value="ENSP00000354089.3"/>
    <property type="gene ID" value="ENSG00000198586.14"/>
</dbReference>
<dbReference type="Ensembl" id="ENST00000431350.7">
    <molecule id="Q9UKI8-1"/>
    <property type="protein sequence ID" value="ENSP00000411099.2"/>
    <property type="gene ID" value="ENSG00000198586.14"/>
</dbReference>
<dbReference type="Ensembl" id="ENST00000434911.6">
    <molecule id="Q9UKI8-4"/>
    <property type="protein sequence ID" value="ENSP00000409222.2"/>
    <property type="gene ID" value="ENSG00000198586.14"/>
</dbReference>
<dbReference type="Ensembl" id="ENST00000521943.5">
    <molecule id="Q9UKI8-5"/>
    <property type="protein sequence ID" value="ENSP00000428113.1"/>
    <property type="gene ID" value="ENSG00000198586.14"/>
</dbReference>
<dbReference type="GeneID" id="9874"/>
<dbReference type="KEGG" id="hsa:9874"/>
<dbReference type="MANE-Select" id="ENST00000431350.7">
    <property type="protein sequence ID" value="ENSP00000411099.2"/>
    <property type="RefSeq nucleotide sequence ID" value="NM_012290.5"/>
    <property type="RefSeq protein sequence ID" value="NP_036422.3"/>
</dbReference>
<dbReference type="UCSC" id="uc002ugn.3">
    <molecule id="Q9UKI8-1"/>
    <property type="organism name" value="human"/>
</dbReference>
<dbReference type="AGR" id="HGNC:11841"/>
<dbReference type="CTD" id="9874"/>
<dbReference type="DisGeNET" id="9874"/>
<dbReference type="GeneCards" id="TLK1"/>
<dbReference type="HGNC" id="HGNC:11841">
    <property type="gene designation" value="TLK1"/>
</dbReference>
<dbReference type="HPA" id="ENSG00000198586">
    <property type="expression patterns" value="Low tissue specificity"/>
</dbReference>
<dbReference type="MIM" id="608438">
    <property type="type" value="gene"/>
</dbReference>
<dbReference type="neXtProt" id="NX_Q9UKI8"/>
<dbReference type="OpenTargets" id="ENSG00000198586"/>
<dbReference type="PharmGKB" id="PA36543"/>
<dbReference type="VEuPathDB" id="HostDB:ENSG00000198586"/>
<dbReference type="eggNOG" id="KOG1151">
    <property type="taxonomic scope" value="Eukaryota"/>
</dbReference>
<dbReference type="GeneTree" id="ENSGT00950000182984"/>
<dbReference type="InParanoid" id="Q9UKI8"/>
<dbReference type="OMA" id="YKHACRE"/>
<dbReference type="OrthoDB" id="346907at2759"/>
<dbReference type="PAN-GO" id="Q9UKI8">
    <property type="GO annotations" value="5 GO annotations based on evolutionary models"/>
</dbReference>
<dbReference type="PhylomeDB" id="Q9UKI8"/>
<dbReference type="TreeFam" id="TF315233"/>
<dbReference type="PathwayCommons" id="Q9UKI8"/>
<dbReference type="SignaLink" id="Q9UKI8"/>
<dbReference type="SIGNOR" id="Q9UKI8"/>
<dbReference type="BioGRID-ORCS" id="9874">
    <property type="hits" value="28 hits in 1194 CRISPR screens"/>
</dbReference>
<dbReference type="ChiTaRS" id="TLK1">
    <property type="organism name" value="human"/>
</dbReference>
<dbReference type="GeneWiki" id="TLK1"/>
<dbReference type="GenomeRNAi" id="9874"/>
<dbReference type="Pharos" id="Q9UKI8">
    <property type="development level" value="Tchem"/>
</dbReference>
<dbReference type="PRO" id="PR:Q9UKI8"/>
<dbReference type="Proteomes" id="UP000005640">
    <property type="component" value="Chromosome 2"/>
</dbReference>
<dbReference type="RNAct" id="Q9UKI8">
    <property type="molecule type" value="protein"/>
</dbReference>
<dbReference type="Bgee" id="ENSG00000198586">
    <property type="expression patterns" value="Expressed in lateral nuclear group of thalamus and 209 other cell types or tissues"/>
</dbReference>
<dbReference type="ExpressionAtlas" id="Q9UKI8">
    <property type="expression patterns" value="baseline and differential"/>
</dbReference>
<dbReference type="GO" id="GO:0005654">
    <property type="term" value="C:nucleoplasm"/>
    <property type="evidence" value="ECO:0000314"/>
    <property type="project" value="HPA"/>
</dbReference>
<dbReference type="GO" id="GO:0005634">
    <property type="term" value="C:nucleus"/>
    <property type="evidence" value="ECO:0000314"/>
    <property type="project" value="UniProtKB"/>
</dbReference>
<dbReference type="GO" id="GO:0005524">
    <property type="term" value="F:ATP binding"/>
    <property type="evidence" value="ECO:0000314"/>
    <property type="project" value="UniProtKB"/>
</dbReference>
<dbReference type="GO" id="GO:0106310">
    <property type="term" value="F:protein serine kinase activity"/>
    <property type="evidence" value="ECO:0007669"/>
    <property type="project" value="RHEA"/>
</dbReference>
<dbReference type="GO" id="GO:0004674">
    <property type="term" value="F:protein serine/threonine kinase activity"/>
    <property type="evidence" value="ECO:0000314"/>
    <property type="project" value="UniProtKB"/>
</dbReference>
<dbReference type="GO" id="GO:0006325">
    <property type="term" value="P:chromatin organization"/>
    <property type="evidence" value="ECO:0007669"/>
    <property type="project" value="UniProtKB-KW"/>
</dbReference>
<dbReference type="GO" id="GO:0007059">
    <property type="term" value="P:chromosome segregation"/>
    <property type="evidence" value="ECO:0000318"/>
    <property type="project" value="GO_Central"/>
</dbReference>
<dbReference type="GO" id="GO:0006974">
    <property type="term" value="P:DNA damage response"/>
    <property type="evidence" value="ECO:0007669"/>
    <property type="project" value="UniProtKB-KW"/>
</dbReference>
<dbReference type="GO" id="GO:0006886">
    <property type="term" value="P:intracellular protein transport"/>
    <property type="evidence" value="ECO:0000314"/>
    <property type="project" value="UniProtKB"/>
</dbReference>
<dbReference type="GO" id="GO:0035556">
    <property type="term" value="P:intracellular signal transduction"/>
    <property type="evidence" value="ECO:0000314"/>
    <property type="project" value="UniProtKB"/>
</dbReference>
<dbReference type="GO" id="GO:0006468">
    <property type="term" value="P:protein phosphorylation"/>
    <property type="evidence" value="ECO:0000314"/>
    <property type="project" value="UniProtKB"/>
</dbReference>
<dbReference type="GO" id="GO:1902275">
    <property type="term" value="P:regulation of chromatin organization"/>
    <property type="evidence" value="ECO:0000314"/>
    <property type="project" value="UniProtKB"/>
</dbReference>
<dbReference type="CDD" id="cd14040">
    <property type="entry name" value="STKc_TLK1"/>
    <property type="match status" value="1"/>
</dbReference>
<dbReference type="FunFam" id="1.10.510.10:FF:000037">
    <property type="entry name" value="Serine/threonine-protein kinase tousled-like 2"/>
    <property type="match status" value="1"/>
</dbReference>
<dbReference type="Gene3D" id="1.10.510.10">
    <property type="entry name" value="Transferase(Phosphotransferase) domain 1"/>
    <property type="match status" value="1"/>
</dbReference>
<dbReference type="InterPro" id="IPR011009">
    <property type="entry name" value="Kinase-like_dom_sf"/>
</dbReference>
<dbReference type="InterPro" id="IPR000719">
    <property type="entry name" value="Prot_kinase_dom"/>
</dbReference>
<dbReference type="InterPro" id="IPR017441">
    <property type="entry name" value="Protein_kinase_ATP_BS"/>
</dbReference>
<dbReference type="InterPro" id="IPR008271">
    <property type="entry name" value="Ser/Thr_kinase_AS"/>
</dbReference>
<dbReference type="PANTHER" id="PTHR22974">
    <property type="entry name" value="MIXED LINEAGE PROTEIN KINASE"/>
    <property type="match status" value="1"/>
</dbReference>
<dbReference type="PANTHER" id="PTHR22974:SF22">
    <property type="entry name" value="SERINE_THREONINE-PROTEIN KINASE TOUSLED-LIKE 1"/>
    <property type="match status" value="1"/>
</dbReference>
<dbReference type="Pfam" id="PF00069">
    <property type="entry name" value="Pkinase"/>
    <property type="match status" value="1"/>
</dbReference>
<dbReference type="SMART" id="SM00220">
    <property type="entry name" value="S_TKc"/>
    <property type="match status" value="1"/>
</dbReference>
<dbReference type="SUPFAM" id="SSF56112">
    <property type="entry name" value="Protein kinase-like (PK-like)"/>
    <property type="match status" value="1"/>
</dbReference>
<dbReference type="PROSITE" id="PS00107">
    <property type="entry name" value="PROTEIN_KINASE_ATP"/>
    <property type="match status" value="1"/>
</dbReference>
<dbReference type="PROSITE" id="PS50011">
    <property type="entry name" value="PROTEIN_KINASE_DOM"/>
    <property type="match status" value="1"/>
</dbReference>
<dbReference type="PROSITE" id="PS00108">
    <property type="entry name" value="PROTEIN_KINASE_ST"/>
    <property type="match status" value="1"/>
</dbReference>
<keyword id="KW-0007">Acetylation</keyword>
<keyword id="KW-0025">Alternative splicing</keyword>
<keyword id="KW-0067">ATP-binding</keyword>
<keyword id="KW-0131">Cell cycle</keyword>
<keyword id="KW-0156">Chromatin regulator</keyword>
<keyword id="KW-0175">Coiled coil</keyword>
<keyword id="KW-0227">DNA damage</keyword>
<keyword id="KW-0418">Kinase</keyword>
<keyword id="KW-0547">Nucleotide-binding</keyword>
<keyword id="KW-0539">Nucleus</keyword>
<keyword id="KW-0597">Phosphoprotein</keyword>
<keyword id="KW-1267">Proteomics identification</keyword>
<keyword id="KW-1185">Reference proteome</keyword>
<keyword id="KW-0723">Serine/threonine-protein kinase</keyword>
<keyword id="KW-0808">Transferase</keyword>
<proteinExistence type="evidence at protein level"/>
<reference evidence="19" key="1">
    <citation type="journal article" date="1997" name="Gene">
        <title>cDNA cloning and chromosomal mapping of genes encoding novel protein kinases termed PKU-alpha and PKU-beta, which have nuclear localization signal.</title>
        <authorList>
            <person name="Yamakawa A."/>
            <person name="Kameoka Y."/>
            <person name="Hashimoto K."/>
            <person name="Yoshitake Y."/>
            <person name="Nishikawa K."/>
            <person name="Tanihara K."/>
            <person name="Date T."/>
        </authorList>
    </citation>
    <scope>NUCLEOTIDE SEQUENCE [MRNA] (ISOFORM 2)</scope>
    <scope>FUNCTION</scope>
    <scope>SUBCELLULAR LOCATION</scope>
    <scope>TISSUE SPECIFICITY</scope>
    <source>
        <tissue evidence="15">Placenta</tissue>
        <tissue evidence="15">Testis</tissue>
    </source>
</reference>
<reference evidence="19" key="2">
    <citation type="journal article" date="1999" name="EMBO J.">
        <title>Mammalian homologues of the plant tousled gene code for cell-cycle-regulated kinases with maximal activities linked to ongoing DNA replication.</title>
        <authorList>
            <person name="Sillje H.H.W."/>
            <person name="Takahashi K."/>
            <person name="Tanaka K."/>
            <person name="Van Houwe G."/>
            <person name="Nigg E.A."/>
        </authorList>
    </citation>
    <scope>NUCLEOTIDE SEQUENCE [MRNA] (ISOFORM 1)</scope>
    <scope>FUNCTION</scope>
    <scope>MUTAGENESIS OF ASP-607</scope>
    <scope>SUBCELLULAR LOCATION</scope>
    <scope>INTERACTION WITH TLK2</scope>
    <scope>ACTIVITY REGULATION</scope>
    <source>
        <tissue evidence="20">Placenta</tissue>
    </source>
</reference>
<reference evidence="19" key="3">
    <citation type="journal article" date="1999" name="Mol. Biol. Cell">
        <title>Phosphorylation of SNAP-23 by the novel kinase SNAK regulates t-SNARE complex assembly.</title>
        <authorList>
            <person name="Cabaniols J.-P."/>
            <person name="Ravichandran V."/>
            <person name="Roche P.A."/>
        </authorList>
    </citation>
    <scope>NUCLEOTIDE SEQUENCE [MRNA] (ISOFORM 3)</scope>
    <scope>FUNCTION</scope>
    <scope>SUBCELLULAR LOCATION</scope>
    <scope>TISSUE SPECIFICITY</scope>
    <source>
        <tissue evidence="7">Placenta</tissue>
    </source>
</reference>
<reference evidence="19" key="4">
    <citation type="journal article" date="1995" name="DNA Res.">
        <title>Prediction of the coding sequences of unidentified human genes. IV. The coding sequences of 40 new genes (KIAA0121-KIAA0160) deduced by analysis of cDNA clones from human cell line KG-1.</title>
        <authorList>
            <person name="Nagase T."/>
            <person name="Seki N."/>
            <person name="Tanaka A."/>
            <person name="Ishikawa K."/>
            <person name="Nomura N."/>
        </authorList>
    </citation>
    <scope>NUCLEOTIDE SEQUENCE [LARGE SCALE MRNA] (ISOFORM 1)</scope>
    <source>
        <tissue evidence="14">Bone marrow</tissue>
    </source>
</reference>
<reference key="5">
    <citation type="journal article" date="2002" name="DNA Res.">
        <title>Construction of expression-ready cDNA clones for KIAA genes: manual curation of 330 KIAA cDNA clones.</title>
        <authorList>
            <person name="Nakajima D."/>
            <person name="Okazaki N."/>
            <person name="Yamakawa H."/>
            <person name="Kikuno R."/>
            <person name="Ohara O."/>
            <person name="Nagase T."/>
        </authorList>
    </citation>
    <scope>SEQUENCE REVISION</scope>
</reference>
<reference key="6">
    <citation type="journal article" date="2004" name="Nat. Genet.">
        <title>Complete sequencing and characterization of 21,243 full-length human cDNAs.</title>
        <authorList>
            <person name="Ota T."/>
            <person name="Suzuki Y."/>
            <person name="Nishikawa T."/>
            <person name="Otsuki T."/>
            <person name="Sugiyama T."/>
            <person name="Irie R."/>
            <person name="Wakamatsu A."/>
            <person name="Hayashi K."/>
            <person name="Sato H."/>
            <person name="Nagai K."/>
            <person name="Kimura K."/>
            <person name="Makita H."/>
            <person name="Sekine M."/>
            <person name="Obayashi M."/>
            <person name="Nishi T."/>
            <person name="Shibahara T."/>
            <person name="Tanaka T."/>
            <person name="Ishii S."/>
            <person name="Yamamoto J."/>
            <person name="Saito K."/>
            <person name="Kawai Y."/>
            <person name="Isono Y."/>
            <person name="Nakamura Y."/>
            <person name="Nagahari K."/>
            <person name="Murakami K."/>
            <person name="Yasuda T."/>
            <person name="Iwayanagi T."/>
            <person name="Wagatsuma M."/>
            <person name="Shiratori A."/>
            <person name="Sudo H."/>
            <person name="Hosoiri T."/>
            <person name="Kaku Y."/>
            <person name="Kodaira H."/>
            <person name="Kondo H."/>
            <person name="Sugawara M."/>
            <person name="Takahashi M."/>
            <person name="Kanda K."/>
            <person name="Yokoi T."/>
            <person name="Furuya T."/>
            <person name="Kikkawa E."/>
            <person name="Omura Y."/>
            <person name="Abe K."/>
            <person name="Kamihara K."/>
            <person name="Katsuta N."/>
            <person name="Sato K."/>
            <person name="Tanikawa M."/>
            <person name="Yamazaki M."/>
            <person name="Ninomiya K."/>
            <person name="Ishibashi T."/>
            <person name="Yamashita H."/>
            <person name="Murakawa K."/>
            <person name="Fujimori K."/>
            <person name="Tanai H."/>
            <person name="Kimata M."/>
            <person name="Watanabe M."/>
            <person name="Hiraoka S."/>
            <person name="Chiba Y."/>
            <person name="Ishida S."/>
            <person name="Ono Y."/>
            <person name="Takiguchi S."/>
            <person name="Watanabe S."/>
            <person name="Yosida M."/>
            <person name="Hotuta T."/>
            <person name="Kusano J."/>
            <person name="Kanehori K."/>
            <person name="Takahashi-Fujii A."/>
            <person name="Hara H."/>
            <person name="Tanase T.-O."/>
            <person name="Nomura Y."/>
            <person name="Togiya S."/>
            <person name="Komai F."/>
            <person name="Hara R."/>
            <person name="Takeuchi K."/>
            <person name="Arita M."/>
            <person name="Imose N."/>
            <person name="Musashino K."/>
            <person name="Yuuki H."/>
            <person name="Oshima A."/>
            <person name="Sasaki N."/>
            <person name="Aotsuka S."/>
            <person name="Yoshikawa Y."/>
            <person name="Matsunawa H."/>
            <person name="Ichihara T."/>
            <person name="Shiohata N."/>
            <person name="Sano S."/>
            <person name="Moriya S."/>
            <person name="Momiyama H."/>
            <person name="Satoh N."/>
            <person name="Takami S."/>
            <person name="Terashima Y."/>
            <person name="Suzuki O."/>
            <person name="Nakagawa S."/>
            <person name="Senoh A."/>
            <person name="Mizoguchi H."/>
            <person name="Goto Y."/>
            <person name="Shimizu F."/>
            <person name="Wakebe H."/>
            <person name="Hishigaki H."/>
            <person name="Watanabe T."/>
            <person name="Sugiyama A."/>
            <person name="Takemoto M."/>
            <person name="Kawakami B."/>
            <person name="Yamazaki M."/>
            <person name="Watanabe K."/>
            <person name="Kumagai A."/>
            <person name="Itakura S."/>
            <person name="Fukuzumi Y."/>
            <person name="Fujimori Y."/>
            <person name="Komiyama M."/>
            <person name="Tashiro H."/>
            <person name="Tanigami A."/>
            <person name="Fujiwara T."/>
            <person name="Ono T."/>
            <person name="Yamada K."/>
            <person name="Fujii Y."/>
            <person name="Ozaki K."/>
            <person name="Hirao M."/>
            <person name="Ohmori Y."/>
            <person name="Kawabata A."/>
            <person name="Hikiji T."/>
            <person name="Kobatake N."/>
            <person name="Inagaki H."/>
            <person name="Ikema Y."/>
            <person name="Okamoto S."/>
            <person name="Okitani R."/>
            <person name="Kawakami T."/>
            <person name="Noguchi S."/>
            <person name="Itoh T."/>
            <person name="Shigeta K."/>
            <person name="Senba T."/>
            <person name="Matsumura K."/>
            <person name="Nakajima Y."/>
            <person name="Mizuno T."/>
            <person name="Morinaga M."/>
            <person name="Sasaki M."/>
            <person name="Togashi T."/>
            <person name="Oyama M."/>
            <person name="Hata H."/>
            <person name="Watanabe M."/>
            <person name="Komatsu T."/>
            <person name="Mizushima-Sugano J."/>
            <person name="Satoh T."/>
            <person name="Shirai Y."/>
            <person name="Takahashi Y."/>
            <person name="Nakagawa K."/>
            <person name="Okumura K."/>
            <person name="Nagase T."/>
            <person name="Nomura N."/>
            <person name="Kikuchi H."/>
            <person name="Masuho Y."/>
            <person name="Yamashita R."/>
            <person name="Nakai K."/>
            <person name="Yada T."/>
            <person name="Nakamura Y."/>
            <person name="Ohara O."/>
            <person name="Isogai T."/>
            <person name="Sugano S."/>
        </authorList>
    </citation>
    <scope>NUCLEOTIDE SEQUENCE [LARGE SCALE MRNA] (ISOFORMS 4 AND 5)</scope>
    <source>
        <tissue>Amygdala</tissue>
        <tissue>Testis</tissue>
    </source>
</reference>
<reference key="7">
    <citation type="journal article" date="2005" name="Nature">
        <title>Generation and annotation of the DNA sequences of human chromosomes 2 and 4.</title>
        <authorList>
            <person name="Hillier L.W."/>
            <person name="Graves T.A."/>
            <person name="Fulton R.S."/>
            <person name="Fulton L.A."/>
            <person name="Pepin K.H."/>
            <person name="Minx P."/>
            <person name="Wagner-McPherson C."/>
            <person name="Layman D."/>
            <person name="Wylie K."/>
            <person name="Sekhon M."/>
            <person name="Becker M.C."/>
            <person name="Fewell G.A."/>
            <person name="Delehaunty K.D."/>
            <person name="Miner T.L."/>
            <person name="Nash W.E."/>
            <person name="Kremitzki C."/>
            <person name="Oddy L."/>
            <person name="Du H."/>
            <person name="Sun H."/>
            <person name="Bradshaw-Cordum H."/>
            <person name="Ali J."/>
            <person name="Carter J."/>
            <person name="Cordes M."/>
            <person name="Harris A."/>
            <person name="Isak A."/>
            <person name="van Brunt A."/>
            <person name="Nguyen C."/>
            <person name="Du F."/>
            <person name="Courtney L."/>
            <person name="Kalicki J."/>
            <person name="Ozersky P."/>
            <person name="Abbott S."/>
            <person name="Armstrong J."/>
            <person name="Belter E.A."/>
            <person name="Caruso L."/>
            <person name="Cedroni M."/>
            <person name="Cotton M."/>
            <person name="Davidson T."/>
            <person name="Desai A."/>
            <person name="Elliott G."/>
            <person name="Erb T."/>
            <person name="Fronick C."/>
            <person name="Gaige T."/>
            <person name="Haakenson W."/>
            <person name="Haglund K."/>
            <person name="Holmes A."/>
            <person name="Harkins R."/>
            <person name="Kim K."/>
            <person name="Kruchowski S.S."/>
            <person name="Strong C.M."/>
            <person name="Grewal N."/>
            <person name="Goyea E."/>
            <person name="Hou S."/>
            <person name="Levy A."/>
            <person name="Martinka S."/>
            <person name="Mead K."/>
            <person name="McLellan M.D."/>
            <person name="Meyer R."/>
            <person name="Randall-Maher J."/>
            <person name="Tomlinson C."/>
            <person name="Dauphin-Kohlberg S."/>
            <person name="Kozlowicz-Reilly A."/>
            <person name="Shah N."/>
            <person name="Swearengen-Shahid S."/>
            <person name="Snider J."/>
            <person name="Strong J.T."/>
            <person name="Thompson J."/>
            <person name="Yoakum M."/>
            <person name="Leonard S."/>
            <person name="Pearman C."/>
            <person name="Trani L."/>
            <person name="Radionenko M."/>
            <person name="Waligorski J.E."/>
            <person name="Wang C."/>
            <person name="Rock S.M."/>
            <person name="Tin-Wollam A.-M."/>
            <person name="Maupin R."/>
            <person name="Latreille P."/>
            <person name="Wendl M.C."/>
            <person name="Yang S.-P."/>
            <person name="Pohl C."/>
            <person name="Wallis J.W."/>
            <person name="Spieth J."/>
            <person name="Bieri T.A."/>
            <person name="Berkowicz N."/>
            <person name="Nelson J.O."/>
            <person name="Osborne J."/>
            <person name="Ding L."/>
            <person name="Meyer R."/>
            <person name="Sabo A."/>
            <person name="Shotland Y."/>
            <person name="Sinha P."/>
            <person name="Wohldmann P.E."/>
            <person name="Cook L.L."/>
            <person name="Hickenbotham M.T."/>
            <person name="Eldred J."/>
            <person name="Williams D."/>
            <person name="Jones T.A."/>
            <person name="She X."/>
            <person name="Ciccarelli F.D."/>
            <person name="Izaurralde E."/>
            <person name="Taylor J."/>
            <person name="Schmutz J."/>
            <person name="Myers R.M."/>
            <person name="Cox D.R."/>
            <person name="Huang X."/>
            <person name="McPherson J.D."/>
            <person name="Mardis E.R."/>
            <person name="Clifton S.W."/>
            <person name="Warren W.C."/>
            <person name="Chinwalla A.T."/>
            <person name="Eddy S.R."/>
            <person name="Marra M.A."/>
            <person name="Ovcharenko I."/>
            <person name="Furey T.S."/>
            <person name="Miller W."/>
            <person name="Eichler E.E."/>
            <person name="Bork P."/>
            <person name="Suyama M."/>
            <person name="Torrents D."/>
            <person name="Waterston R.H."/>
            <person name="Wilson R.K."/>
        </authorList>
    </citation>
    <scope>NUCLEOTIDE SEQUENCE [LARGE SCALE GENOMIC DNA]</scope>
</reference>
<reference evidence="19" key="8">
    <citation type="journal article" date="2004" name="Genome Res.">
        <title>The status, quality, and expansion of the NIH full-length cDNA project: the Mammalian Gene Collection (MGC).</title>
        <authorList>
            <consortium name="The MGC Project Team"/>
        </authorList>
    </citation>
    <scope>NUCLEOTIDE SEQUENCE [LARGE SCALE MRNA] (ISOFORM 1)</scope>
    <source>
        <tissue evidence="21">Uterus</tissue>
    </source>
</reference>
<reference key="9">
    <citation type="journal article" date="2001" name="Curr. Biol.">
        <title>Identification of human Asf1 chromatin assembly factors as substrates of Tousled-like kinases.</title>
        <authorList>
            <person name="Sillje H.H.W."/>
            <person name="Nigg E.A."/>
        </authorList>
    </citation>
    <scope>FUNCTION</scope>
    <scope>INTERACTION WITH ASF1A AND ASF1B</scope>
    <scope>MUTAGENESIS OF ASP-607</scope>
</reference>
<reference key="10">
    <citation type="journal article" date="2001" name="Oncogene">
        <title>A translationally regulated Tousled kinase phosphorylates histone H3 and confers radioresistance when overexpressed.</title>
        <authorList>
            <person name="Li Y."/>
            <person name="DeFatta R."/>
            <person name="Anthony C."/>
            <person name="Sunavala G."/>
            <person name="De Benedetti A."/>
        </authorList>
    </citation>
    <scope>FUNCTION</scope>
    <scope>SUBCELLULAR LOCATION</scope>
    <scope>PHOSPHORYLATION OF HISTONE H3</scope>
</reference>
<reference evidence="19" key="11">
    <citation type="journal article" date="2003" name="EMBO J.">
        <title>Human tousled like kinases are targeted by an ATM- and Chk1-dependent DNA damage checkpoint.</title>
        <authorList>
            <person name="Groth A."/>
            <person name="Lukas J."/>
            <person name="Nigg E.A."/>
            <person name="Sillje H.H.W."/>
            <person name="Wernstedt C."/>
            <person name="Bartek J."/>
            <person name="Hansen K."/>
        </authorList>
    </citation>
    <scope>FUNCTION</scope>
    <scope>MUTAGENESIS OF SER-743</scope>
    <scope>PHOSPHORYLATION AT SER-743</scope>
    <scope>ACTIVITY REGULATION</scope>
</reference>
<reference key="12">
    <citation type="journal article" date="2008" name="Proc. Natl. Acad. Sci. U.S.A.">
        <title>A quantitative atlas of mitotic phosphorylation.</title>
        <authorList>
            <person name="Dephoure N."/>
            <person name="Zhou C."/>
            <person name="Villen J."/>
            <person name="Beausoleil S.A."/>
            <person name="Bakalarski C.E."/>
            <person name="Elledge S.J."/>
            <person name="Gygi S.P."/>
        </authorList>
    </citation>
    <scope>IDENTIFICATION BY MASS SPECTROMETRY [LARGE SCALE ANALYSIS]</scope>
    <source>
        <tissue>Cervix carcinoma</tissue>
    </source>
</reference>
<reference key="13">
    <citation type="journal article" date="2009" name="Mol. Cell. Proteomics">
        <title>Large-scale proteomics analysis of the human kinome.</title>
        <authorList>
            <person name="Oppermann F.S."/>
            <person name="Gnad F."/>
            <person name="Olsen J.V."/>
            <person name="Hornberger R."/>
            <person name="Greff Z."/>
            <person name="Keri G."/>
            <person name="Mann M."/>
            <person name="Daub H."/>
        </authorList>
    </citation>
    <scope>IDENTIFICATION BY MASS SPECTROMETRY [LARGE SCALE ANALYSIS]</scope>
</reference>
<reference key="14">
    <citation type="journal article" date="2009" name="Sci. Signal.">
        <title>Quantitative phosphoproteomic analysis of T cell receptor signaling reveals system-wide modulation of protein-protein interactions.</title>
        <authorList>
            <person name="Mayya V."/>
            <person name="Lundgren D.H."/>
            <person name="Hwang S.-I."/>
            <person name="Rezaul K."/>
            <person name="Wu L."/>
            <person name="Eng J.K."/>
            <person name="Rodionov V."/>
            <person name="Han D.K."/>
        </authorList>
    </citation>
    <scope>PHOSPHORYLATION [LARGE SCALE ANALYSIS] AT SER-159</scope>
    <scope>IDENTIFICATION BY MASS SPECTROMETRY [LARGE SCALE ANALYSIS]</scope>
    <source>
        <tissue>Leukemic T-cell</tissue>
    </source>
</reference>
<reference key="15">
    <citation type="journal article" date="2010" name="Sci. Signal.">
        <title>Quantitative phosphoproteomics reveals widespread full phosphorylation site occupancy during mitosis.</title>
        <authorList>
            <person name="Olsen J.V."/>
            <person name="Vermeulen M."/>
            <person name="Santamaria A."/>
            <person name="Kumar C."/>
            <person name="Miller M.L."/>
            <person name="Jensen L.J."/>
            <person name="Gnad F."/>
            <person name="Cox J."/>
            <person name="Jensen T.S."/>
            <person name="Nigg E.A."/>
            <person name="Brunak S."/>
            <person name="Mann M."/>
        </authorList>
    </citation>
    <scope>PHOSPHORYLATION [LARGE SCALE ANALYSIS] AT SER-159</scope>
    <scope>IDENTIFICATION BY MASS SPECTROMETRY [LARGE SCALE ANALYSIS]</scope>
    <source>
        <tissue>Cervix carcinoma</tissue>
    </source>
</reference>
<reference key="16">
    <citation type="journal article" date="2011" name="BMC Syst. Biol.">
        <title>Initial characterization of the human central proteome.</title>
        <authorList>
            <person name="Burkard T.R."/>
            <person name="Planyavsky M."/>
            <person name="Kaupe I."/>
            <person name="Breitwieser F.P."/>
            <person name="Buerckstuemmer T."/>
            <person name="Bennett K.L."/>
            <person name="Superti-Furga G."/>
            <person name="Colinge J."/>
        </authorList>
    </citation>
    <scope>IDENTIFICATION BY MASS SPECTROMETRY [LARGE SCALE ANALYSIS]</scope>
</reference>
<reference key="17">
    <citation type="journal article" date="2012" name="Proc. Natl. Acad. Sci. U.S.A.">
        <title>N-terminal acetylome analyses and functional insights of the N-terminal acetyltransferase NatB.</title>
        <authorList>
            <person name="Van Damme P."/>
            <person name="Lasa M."/>
            <person name="Polevoda B."/>
            <person name="Gazquez C."/>
            <person name="Elosegui-Artola A."/>
            <person name="Kim D.S."/>
            <person name="De Juan-Pardo E."/>
            <person name="Demeyer K."/>
            <person name="Hole K."/>
            <person name="Larrea E."/>
            <person name="Timmerman E."/>
            <person name="Prieto J."/>
            <person name="Arnesen T."/>
            <person name="Sherman F."/>
            <person name="Gevaert K."/>
            <person name="Aldabe R."/>
        </authorList>
    </citation>
    <scope>ACETYLATION [LARGE SCALE ANALYSIS] AT MET-1 (ISOFORM 3)</scope>
    <scope>IDENTIFICATION BY MASS SPECTROMETRY [LARGE SCALE ANALYSIS]</scope>
</reference>
<reference key="18">
    <citation type="journal article" date="2013" name="J. Proteome Res.">
        <title>Toward a comprehensive characterization of a human cancer cell phosphoproteome.</title>
        <authorList>
            <person name="Zhou H."/>
            <person name="Di Palma S."/>
            <person name="Preisinger C."/>
            <person name="Peng M."/>
            <person name="Polat A.N."/>
            <person name="Heck A.J."/>
            <person name="Mohammed S."/>
        </authorList>
    </citation>
    <scope>PHOSPHORYLATION [LARGE SCALE ANALYSIS] AT THR-38; SER-54; SER-77 AND SER-159</scope>
    <scope>IDENTIFICATION BY MASS SPECTROMETRY [LARGE SCALE ANALYSIS]</scope>
    <source>
        <tissue>Cervix carcinoma</tissue>
        <tissue>Erythroleukemia</tissue>
    </source>
</reference>
<reference key="19">
    <citation type="journal article" date="2018" name="Nat. Commun.">
        <title>Molecular basis of Tousled-Like Kinase 2 activation.</title>
        <authorList>
            <person name="Mortuza G.B."/>
            <person name="Hermida D."/>
            <person name="Pedersen A.K."/>
            <person name="Segura-Bayona S."/>
            <person name="Lopez-Mendez B."/>
            <person name="Redondo P."/>
            <person name="Ruther P."/>
            <person name="Pozdnyakova I."/>
            <person name="Garrote A.M."/>
            <person name="Munoz I.G."/>
            <person name="Villamor-Paya M."/>
            <person name="Jauset C."/>
            <person name="Olsen J.V."/>
            <person name="Stracker T.H."/>
            <person name="Montoya G."/>
        </authorList>
    </citation>
    <scope>INTERACTION WITH TLK2</scope>
</reference>
<reference key="20">
    <citation type="journal article" date="2022" name="J. Med. Genet.">
        <title>Functional analysis of TLK2 variants and their proximal interactomes implicates impaired kinase activity and chromatin maintenance defects in their pathogenesis.</title>
        <authorList>
            <person name="Pavinato L."/>
            <person name="Villamor-Paya M."/>
            <person name="Sanchiz-Calvo M."/>
            <person name="Andreoli C."/>
            <person name="Gay M."/>
            <person name="Vilaseca M."/>
            <person name="Arauz-Garofalo G."/>
            <person name="Ciolfi A."/>
            <person name="Bruselles A."/>
            <person name="Pippucci T."/>
            <person name="Prota V."/>
            <person name="Carli D."/>
            <person name="Giorgio E."/>
            <person name="Radio F.C."/>
            <person name="Antona V."/>
            <person name="Giuffre M."/>
            <person name="Ranguin K."/>
            <person name="Colson C."/>
            <person name="De Rubeis S."/>
            <person name="Dimartino P."/>
            <person name="Buxbaum J.D."/>
            <person name="Ferrero G.B."/>
            <person name="Tartaglia M."/>
            <person name="Martinelli S."/>
            <person name="Stracker T.H."/>
            <person name="Brusco A."/>
        </authorList>
    </citation>
    <scope>INTERACTION WITH TLK2</scope>
</reference>
<reference key="21">
    <citation type="journal article" date="2007" name="Nature">
        <title>Patterns of somatic mutation in human cancer genomes.</title>
        <authorList>
            <person name="Greenman C."/>
            <person name="Stephens P."/>
            <person name="Smith R."/>
            <person name="Dalgliesh G.L."/>
            <person name="Hunter C."/>
            <person name="Bignell G."/>
            <person name="Davies H."/>
            <person name="Teague J."/>
            <person name="Butler A."/>
            <person name="Stevens C."/>
            <person name="Edkins S."/>
            <person name="O'Meara S."/>
            <person name="Vastrik I."/>
            <person name="Schmidt E.E."/>
            <person name="Avis T."/>
            <person name="Barthorpe S."/>
            <person name="Bhamra G."/>
            <person name="Buck G."/>
            <person name="Choudhury B."/>
            <person name="Clements J."/>
            <person name="Cole J."/>
            <person name="Dicks E."/>
            <person name="Forbes S."/>
            <person name="Gray K."/>
            <person name="Halliday K."/>
            <person name="Harrison R."/>
            <person name="Hills K."/>
            <person name="Hinton J."/>
            <person name="Jenkinson A."/>
            <person name="Jones D."/>
            <person name="Menzies A."/>
            <person name="Mironenko T."/>
            <person name="Perry J."/>
            <person name="Raine K."/>
            <person name="Richardson D."/>
            <person name="Shepherd R."/>
            <person name="Small A."/>
            <person name="Tofts C."/>
            <person name="Varian J."/>
            <person name="Webb T."/>
            <person name="West S."/>
            <person name="Widaa S."/>
            <person name="Yates A."/>
            <person name="Cahill D.P."/>
            <person name="Louis D.N."/>
            <person name="Goldstraw P."/>
            <person name="Nicholson A.G."/>
            <person name="Brasseur F."/>
            <person name="Looijenga L."/>
            <person name="Weber B.L."/>
            <person name="Chiew Y.-E."/>
            <person name="DeFazio A."/>
            <person name="Greaves M.F."/>
            <person name="Green A.R."/>
            <person name="Campbell P."/>
            <person name="Birney E."/>
            <person name="Easton D.F."/>
            <person name="Chenevix-Trench G."/>
            <person name="Tan M.-H."/>
            <person name="Khoo S.K."/>
            <person name="Teh B.T."/>
            <person name="Yuen S.T."/>
            <person name="Leung S.Y."/>
            <person name="Wooster R."/>
            <person name="Futreal P.A."/>
            <person name="Stratton M.R."/>
        </authorList>
    </citation>
    <scope>VARIANT [LARGE SCALE ANALYSIS] CYS-121</scope>
</reference>
<comment type="function">
    <text evidence="6 7 8 9 10 15">Rapidly and transiently inhibited by phosphorylation following the generation of DNA double-stranded breaks during S-phase. This is cell cycle checkpoint and ATM-pathway dependent and appears to regulate processes involved in chromatin assembly. Isoform 3 phosphorylates and enhances the stability of the t-SNARE SNAP23, augmenting its assembly with syntaxin. Isoform 3 protects the cells from the ionizing radiation by facilitating the repair of DSBs. In vitro, phosphorylates histone H3 at 'Ser-10'.</text>
</comment>
<comment type="catalytic activity">
    <reaction evidence="6 7 15">
        <text>L-seryl-[protein] + ATP = O-phospho-L-seryl-[protein] + ADP + H(+)</text>
        <dbReference type="Rhea" id="RHEA:17989"/>
        <dbReference type="Rhea" id="RHEA-COMP:9863"/>
        <dbReference type="Rhea" id="RHEA-COMP:11604"/>
        <dbReference type="ChEBI" id="CHEBI:15378"/>
        <dbReference type="ChEBI" id="CHEBI:29999"/>
        <dbReference type="ChEBI" id="CHEBI:30616"/>
        <dbReference type="ChEBI" id="CHEBI:83421"/>
        <dbReference type="ChEBI" id="CHEBI:456216"/>
        <dbReference type="EC" id="2.7.11.1"/>
    </reaction>
</comment>
<comment type="catalytic activity">
    <reaction evidence="6 7 15">
        <text>L-threonyl-[protein] + ATP = O-phospho-L-threonyl-[protein] + ADP + H(+)</text>
        <dbReference type="Rhea" id="RHEA:46608"/>
        <dbReference type="Rhea" id="RHEA-COMP:11060"/>
        <dbReference type="Rhea" id="RHEA-COMP:11605"/>
        <dbReference type="ChEBI" id="CHEBI:15378"/>
        <dbReference type="ChEBI" id="CHEBI:30013"/>
        <dbReference type="ChEBI" id="CHEBI:30616"/>
        <dbReference type="ChEBI" id="CHEBI:61977"/>
        <dbReference type="ChEBI" id="CHEBI:456216"/>
        <dbReference type="EC" id="2.7.11.1"/>
    </reaction>
</comment>
<comment type="cofactor">
    <cofactor evidence="6 7 15">
        <name>Mg(2+)</name>
        <dbReference type="ChEBI" id="CHEBI:18420"/>
    </cofactor>
</comment>
<comment type="activity regulation">
    <text evidence="6 10">Cell-cycle regulated, maximal activity in S-phase. Inactivated by phosphorylation at Ser-743, potentially by CHEK1.</text>
</comment>
<comment type="subunit">
    <text evidence="6 12 13">Heterodimer with TLK2.</text>
</comment>
<comment type="interaction">
    <interactant intactId="EBI-740492">
        <id>Q9UKI8</id>
    </interactant>
    <interactant intactId="EBI-749553">
        <id>Q9Y294</id>
        <label>ASF1A</label>
    </interactant>
    <organismsDiffer>false</organismsDiffer>
    <experiments>3</experiments>
</comment>
<comment type="interaction">
    <interactant intactId="EBI-740492">
        <id>Q9UKI8</id>
    </interactant>
    <interactant intactId="EBI-10181188">
        <id>Q8N7W2-2</id>
        <label>BEND7</label>
    </interactant>
    <organismsDiffer>false</organismsDiffer>
    <experiments>3</experiments>
</comment>
<comment type="interaction">
    <interactant intactId="EBI-740492">
        <id>Q9UKI8</id>
    </interactant>
    <interactant intactId="EBI-710457">
        <id>Q7L190</id>
        <label>DPPA4</label>
    </interactant>
    <organismsDiffer>false</organismsDiffer>
    <experiments>3</experiments>
</comment>
<comment type="interaction">
    <interactant intactId="EBI-740492">
        <id>Q9UKI8</id>
    </interactant>
    <interactant intactId="EBI-742371">
        <id>Q96FJ2</id>
        <label>DYNLL2</label>
    </interactant>
    <organismsDiffer>false</organismsDiffer>
    <experiments>6</experiments>
</comment>
<comment type="interaction">
    <interactant intactId="EBI-740492">
        <id>Q9UKI8</id>
    </interactant>
    <interactant intactId="EBI-11519926">
        <id>Q6PI77</id>
        <label>GPRASP3</label>
    </interactant>
    <organismsDiffer>false</organismsDiffer>
    <experiments>3</experiments>
</comment>
<comment type="interaction">
    <interactant intactId="EBI-740492">
        <id>Q9UKI8</id>
    </interactant>
    <interactant intactId="EBI-12179869">
        <id>P50458</id>
        <label>LHX2</label>
    </interactant>
    <organismsDiffer>false</organismsDiffer>
    <experiments>3</experiments>
</comment>
<comment type="interaction">
    <interactant intactId="EBI-740492">
        <id>Q9UKI8</id>
    </interactant>
    <interactant intactId="EBI-10198848">
        <id>Q9P127</id>
        <label>LUZP4</label>
    </interactant>
    <organismsDiffer>false</organismsDiffer>
    <experiments>3</experiments>
</comment>
<comment type="interaction">
    <interactant intactId="EBI-740492">
        <id>Q9UKI8</id>
    </interactant>
    <interactant intactId="EBI-747278">
        <id>P26367</id>
        <label>PAX6</label>
    </interactant>
    <organismsDiffer>false</organismsDiffer>
    <experiments>3</experiments>
</comment>
<comment type="interaction">
    <interactant intactId="EBI-740492">
        <id>Q9UKI8</id>
    </interactant>
    <interactant intactId="EBI-721782">
        <id>Q96BK5</id>
        <label>PINX1</label>
    </interactant>
    <organismsDiffer>false</organismsDiffer>
    <experiments>3</experiments>
</comment>
<comment type="interaction">
    <interactant intactId="EBI-740492">
        <id>Q9UKI8</id>
    </interactant>
    <interactant intactId="EBI-17635971">
        <id>Q06124-2</id>
        <label>PTPN11</label>
    </interactant>
    <organismsDiffer>false</organismsDiffer>
    <experiments>3</experiments>
</comment>
<comment type="interaction">
    <interactant intactId="EBI-740492">
        <id>Q9UKI8</id>
    </interactant>
    <interactant intactId="EBI-717422">
        <id>Q12800</id>
        <label>TFCP2</label>
    </interactant>
    <organismsDiffer>false</organismsDiffer>
    <experiments>3</experiments>
</comment>
<comment type="interaction">
    <interactant intactId="EBI-740492">
        <id>Q9UKI8</id>
    </interactant>
    <interactant intactId="EBI-10184033">
        <id>Q5VU62</id>
        <label>TPM3</label>
    </interactant>
    <organismsDiffer>false</organismsDiffer>
    <experiments>3</experiments>
</comment>
<comment type="interaction">
    <interactant intactId="EBI-740492">
        <id>Q9UKI8</id>
    </interactant>
    <interactant intactId="EBI-12111538">
        <id>Q8IY57-5</id>
        <label>YAF2</label>
    </interactant>
    <organismsDiffer>false</organismsDiffer>
    <experiments>3</experiments>
</comment>
<comment type="interaction">
    <interactant intactId="EBI-740492">
        <id>Q9UKI8</id>
    </interactant>
    <interactant intactId="EBI-625509">
        <id>Q8N720</id>
        <label>ZNF655</label>
    </interactant>
    <organismsDiffer>false</organismsDiffer>
    <experiments>3</experiments>
</comment>
<comment type="interaction">
    <interactant intactId="EBI-740492">
        <id>Q9UKI8</id>
    </interactant>
    <interactant intactId="EBI-2686307">
        <id>Q6PK81</id>
        <label>ZNF773</label>
    </interactant>
    <organismsDiffer>false</organismsDiffer>
    <experiments>3</experiments>
</comment>
<comment type="interaction">
    <interactant intactId="EBI-740492">
        <id>Q9UKI8</id>
    </interactant>
    <interactant intactId="EBI-18036029">
        <id>Q3KNS6-3</id>
        <label>ZNF829</label>
    </interactant>
    <organismsDiffer>false</organismsDiffer>
    <experiments>3</experiments>
</comment>
<comment type="interaction">
    <interactant intactId="EBI-740492">
        <id>Q9UKI8</id>
    </interactant>
    <interactant intactId="EBI-10178224">
        <id>P10073</id>
        <label>ZSCAN22</label>
    </interactant>
    <organismsDiffer>false</organismsDiffer>
    <experiments>3</experiments>
</comment>
<comment type="subcellular location">
    <subcellularLocation>
        <location evidence="6 7 8 15">Nucleus</location>
    </subcellularLocation>
</comment>
<comment type="alternative products">
    <event type="alternative splicing"/>
    <isoform>
        <id>Q9UKI8-1</id>
        <name evidence="6">1</name>
        <sequence type="displayed"/>
    </isoform>
    <isoform>
        <id>Q9UKI8-2</id>
        <name evidence="15">2</name>
        <sequence type="described" ref="VSP_050571"/>
    </isoform>
    <isoform>
        <id>Q9UKI8-3</id>
        <name evidence="7">3</name>
        <name evidence="7">SNAK</name>
        <name>TLK1B</name>
        <sequence type="described" ref="VSP_050570"/>
    </isoform>
    <isoform>
        <id>Q9UKI8-4</id>
        <name>4</name>
        <sequence type="described" ref="VSP_043505 VSP_043506"/>
    </isoform>
    <isoform>
        <id>Q9UKI8-5</id>
        <name>5</name>
        <sequence type="described" ref="VSP_043504"/>
    </isoform>
</comment>
<comment type="tissue specificity">
    <text evidence="7 15">Widely expressed. Present in fetal placenta, liver, kidney and pancreas but not heart or skeletal muscle. Also found in adult cell lines. Isoform 3 is ubiquitously expressed in all tissues examined.</text>
</comment>
<comment type="similarity">
    <text evidence="4">Belongs to the protein kinase superfamily. Ser/Thr protein kinase family.</text>
</comment>
<comment type="sequence caution" evidence="19">
    <conflict type="erroneous initiation">
        <sequence resource="EMBL-CDS" id="AAF03094"/>
    </conflict>
</comment>
<comment type="sequence caution" evidence="19">
    <conflict type="erroneous initiation">
        <sequence resource="EMBL-CDS" id="BAA09486"/>
    </conflict>
</comment>
<accession>Q9UKI8</accession>
<accession>B3KR15</accession>
<accession>B4DX87</accession>
<accession>Q14150</accession>
<accession>Q8N591</accession>
<accession>Q9NYH2</accession>
<accession>Q9Y4F6</accession>
<gene>
    <name type="primary">TLK1</name>
    <name type="synonym">KIAA0137</name>
</gene>
<evidence type="ECO:0000250" key="1">
    <source>
        <dbReference type="UniProtKB" id="Q86UE8"/>
    </source>
</evidence>
<evidence type="ECO:0000250" key="2">
    <source>
        <dbReference type="UniProtKB" id="Q8C0V0"/>
    </source>
</evidence>
<evidence type="ECO:0000255" key="3"/>
<evidence type="ECO:0000255" key="4">
    <source>
        <dbReference type="PROSITE-ProRule" id="PRU00159"/>
    </source>
</evidence>
<evidence type="ECO:0000256" key="5">
    <source>
        <dbReference type="SAM" id="MobiDB-lite"/>
    </source>
</evidence>
<evidence type="ECO:0000269" key="6">
    <source>
    </source>
</evidence>
<evidence type="ECO:0000269" key="7">
    <source>
    </source>
</evidence>
<evidence type="ECO:0000269" key="8">
    <source>
    </source>
</evidence>
<evidence type="ECO:0000269" key="9">
    <source>
    </source>
</evidence>
<evidence type="ECO:0000269" key="10">
    <source>
    </source>
</evidence>
<evidence type="ECO:0000269" key="11">
    <source>
    </source>
</evidence>
<evidence type="ECO:0000269" key="12">
    <source>
    </source>
</evidence>
<evidence type="ECO:0000269" key="13">
    <source>
    </source>
</evidence>
<evidence type="ECO:0000269" key="14">
    <source>
    </source>
</evidence>
<evidence type="ECO:0000269" key="15">
    <source>
    </source>
</evidence>
<evidence type="ECO:0000303" key="16">
    <source>
    </source>
</evidence>
<evidence type="ECO:0000303" key="17">
    <source>
    </source>
</evidence>
<evidence type="ECO:0000303" key="18">
    <source>
    </source>
</evidence>
<evidence type="ECO:0000305" key="19"/>
<evidence type="ECO:0000312" key="20">
    <source>
        <dbReference type="EMBL" id="AAF03094.1"/>
    </source>
</evidence>
<evidence type="ECO:0000312" key="21">
    <source>
        <dbReference type="EMBL" id="AAH32657.1"/>
    </source>
</evidence>
<evidence type="ECO:0007744" key="22">
    <source>
    </source>
</evidence>
<evidence type="ECO:0007744" key="23">
    <source>
    </source>
</evidence>
<evidence type="ECO:0007744" key="24">
    <source>
    </source>
</evidence>
<evidence type="ECO:0007744" key="25">
    <source>
    </source>
</evidence>